<accession>B7IEQ6</accession>
<evidence type="ECO:0000255" key="1">
    <source>
        <dbReference type="HAMAP-Rule" id="MF_00014"/>
    </source>
</evidence>
<keyword id="KW-0143">Chaperone</keyword>
<keyword id="KW-0963">Cytoplasm</keyword>
<keyword id="KW-1185">Reference proteome</keyword>
<keyword id="KW-0690">Ribosome biogenesis</keyword>
<keyword id="KW-0698">rRNA processing</keyword>
<organism>
    <name type="scientific">Thermosipho africanus (strain TCF52B)</name>
    <dbReference type="NCBI Taxonomy" id="484019"/>
    <lineage>
        <taxon>Bacteria</taxon>
        <taxon>Thermotogati</taxon>
        <taxon>Thermotogota</taxon>
        <taxon>Thermotogae</taxon>
        <taxon>Thermotogales</taxon>
        <taxon>Fervidobacteriaceae</taxon>
        <taxon>Thermosipho</taxon>
    </lineage>
</organism>
<comment type="function">
    <text evidence="1">An accessory protein needed during the final step in the assembly of 30S ribosomal subunit, possibly for assembly of the head region. Essential for efficient processing of 16S rRNA. May be needed both before and after RbfA during the maturation of 16S rRNA. It has affinity for free ribosomal 30S subunits but not for 70S ribosomes.</text>
</comment>
<comment type="subunit">
    <text evidence="1">Binds ribosomal protein uS19.</text>
</comment>
<comment type="subcellular location">
    <subcellularLocation>
        <location evidence="1">Cytoplasm</location>
    </subcellularLocation>
</comment>
<comment type="domain">
    <text evidence="1">The PRC barrel domain binds ribosomal protein uS19.</text>
</comment>
<comment type="similarity">
    <text evidence="1">Belongs to the RimM family.</text>
</comment>
<feature type="chain" id="PRO_1000196576" description="Ribosome maturation factor RimM">
    <location>
        <begin position="1"/>
        <end position="178"/>
    </location>
</feature>
<feature type="domain" description="PRC barrel" evidence="1">
    <location>
        <begin position="103"/>
        <end position="177"/>
    </location>
</feature>
<gene>
    <name evidence="1" type="primary">rimM</name>
    <name type="ordered locus">THA_62</name>
</gene>
<reference key="1">
    <citation type="journal article" date="2009" name="J. Bacteriol.">
        <title>The genome of Thermosipho africanus TCF52B: lateral genetic connections to the Firmicutes and Archaea.</title>
        <authorList>
            <person name="Nesboe C.L."/>
            <person name="Bapteste E."/>
            <person name="Curtis B."/>
            <person name="Dahle H."/>
            <person name="Lopez P."/>
            <person name="Macleod D."/>
            <person name="Dlutek M."/>
            <person name="Bowman S."/>
            <person name="Zhaxybayeva O."/>
            <person name="Birkeland N.-K."/>
            <person name="Doolittle W.F."/>
        </authorList>
    </citation>
    <scope>NUCLEOTIDE SEQUENCE [LARGE SCALE GENOMIC DNA]</scope>
    <source>
        <strain>TCF52B</strain>
    </source>
</reference>
<sequence>MINTLRELLSGKVAVAILGKTHGLKGELKLHPFTNFPEIIESLEEIFLYNEKTKQFMVATVENLRLADGYYIIKLNGVENVENARKFVGSKVYINKDELPNLSKDEYYFFEIVGSQVIDESGKVLGVVDEVIQTGSNDVIVVNKNKEDEILIPVIYDYIITLDKENKKIVVKVPEWLD</sequence>
<proteinExistence type="inferred from homology"/>
<protein>
    <recommendedName>
        <fullName evidence="1">Ribosome maturation factor RimM</fullName>
    </recommendedName>
</protein>
<name>RIMM_THEAB</name>
<dbReference type="EMBL" id="CP001185">
    <property type="protein sequence ID" value="ACJ74570.1"/>
    <property type="molecule type" value="Genomic_DNA"/>
</dbReference>
<dbReference type="RefSeq" id="WP_004103395.1">
    <property type="nucleotide sequence ID" value="NC_011653.1"/>
</dbReference>
<dbReference type="SMR" id="B7IEQ6"/>
<dbReference type="STRING" id="484019.THA_62"/>
<dbReference type="KEGG" id="taf:THA_62"/>
<dbReference type="eggNOG" id="COG0806">
    <property type="taxonomic scope" value="Bacteria"/>
</dbReference>
<dbReference type="HOGENOM" id="CLU_077636_3_2_0"/>
<dbReference type="OrthoDB" id="9810331at2"/>
<dbReference type="Proteomes" id="UP000002453">
    <property type="component" value="Chromosome"/>
</dbReference>
<dbReference type="GO" id="GO:0005737">
    <property type="term" value="C:cytoplasm"/>
    <property type="evidence" value="ECO:0007669"/>
    <property type="project" value="UniProtKB-SubCell"/>
</dbReference>
<dbReference type="GO" id="GO:0005840">
    <property type="term" value="C:ribosome"/>
    <property type="evidence" value="ECO:0007669"/>
    <property type="project" value="InterPro"/>
</dbReference>
<dbReference type="GO" id="GO:0043022">
    <property type="term" value="F:ribosome binding"/>
    <property type="evidence" value="ECO:0007669"/>
    <property type="project" value="InterPro"/>
</dbReference>
<dbReference type="GO" id="GO:0042274">
    <property type="term" value="P:ribosomal small subunit biogenesis"/>
    <property type="evidence" value="ECO:0007669"/>
    <property type="project" value="UniProtKB-UniRule"/>
</dbReference>
<dbReference type="GO" id="GO:0006364">
    <property type="term" value="P:rRNA processing"/>
    <property type="evidence" value="ECO:0007669"/>
    <property type="project" value="UniProtKB-UniRule"/>
</dbReference>
<dbReference type="Gene3D" id="2.30.30.240">
    <property type="entry name" value="PRC-barrel domain"/>
    <property type="match status" value="1"/>
</dbReference>
<dbReference type="Gene3D" id="2.40.30.60">
    <property type="entry name" value="RimM"/>
    <property type="match status" value="1"/>
</dbReference>
<dbReference type="HAMAP" id="MF_00014">
    <property type="entry name" value="Ribosome_mat_RimM"/>
    <property type="match status" value="1"/>
</dbReference>
<dbReference type="InterPro" id="IPR011033">
    <property type="entry name" value="PRC_barrel-like_sf"/>
</dbReference>
<dbReference type="InterPro" id="IPR056792">
    <property type="entry name" value="PRC_RimM"/>
</dbReference>
<dbReference type="InterPro" id="IPR011961">
    <property type="entry name" value="RimM"/>
</dbReference>
<dbReference type="InterPro" id="IPR002676">
    <property type="entry name" value="RimM_N"/>
</dbReference>
<dbReference type="InterPro" id="IPR036976">
    <property type="entry name" value="RimM_N_sf"/>
</dbReference>
<dbReference type="InterPro" id="IPR009000">
    <property type="entry name" value="Transl_B-barrel_sf"/>
</dbReference>
<dbReference type="NCBIfam" id="TIGR02273">
    <property type="entry name" value="16S_RimM"/>
    <property type="match status" value="1"/>
</dbReference>
<dbReference type="PANTHER" id="PTHR33692">
    <property type="entry name" value="RIBOSOME MATURATION FACTOR RIMM"/>
    <property type="match status" value="1"/>
</dbReference>
<dbReference type="PANTHER" id="PTHR33692:SF1">
    <property type="entry name" value="RIBOSOME MATURATION FACTOR RIMM"/>
    <property type="match status" value="1"/>
</dbReference>
<dbReference type="Pfam" id="PF24986">
    <property type="entry name" value="PRC_RimM"/>
    <property type="match status" value="1"/>
</dbReference>
<dbReference type="Pfam" id="PF01782">
    <property type="entry name" value="RimM"/>
    <property type="match status" value="1"/>
</dbReference>
<dbReference type="SUPFAM" id="SSF50346">
    <property type="entry name" value="PRC-barrel domain"/>
    <property type="match status" value="1"/>
</dbReference>
<dbReference type="SUPFAM" id="SSF50447">
    <property type="entry name" value="Translation proteins"/>
    <property type="match status" value="1"/>
</dbReference>